<protein>
    <recommendedName>
        <fullName>Probable endo-1,3(4)-beta-glucanase An02g00850</fullName>
        <ecNumber>3.2.1.6</ecNumber>
    </recommendedName>
    <alternativeName>
        <fullName>Mixed-linked glucanase An02g00850</fullName>
    </alternativeName>
</protein>
<dbReference type="EC" id="3.2.1.6"/>
<dbReference type="EMBL" id="AM269996">
    <property type="protein sequence ID" value="CAK96300.1"/>
    <property type="molecule type" value="Genomic_DNA"/>
</dbReference>
<dbReference type="RefSeq" id="XP_001399223.1">
    <property type="nucleotide sequence ID" value="XM_001399186.1"/>
</dbReference>
<dbReference type="SMR" id="A2QBQ3"/>
<dbReference type="CAZy" id="GH16">
    <property type="family name" value="Glycoside Hydrolase Family 16"/>
</dbReference>
<dbReference type="EnsemblFungi" id="CAK96300">
    <property type="protein sequence ID" value="CAK96300"/>
    <property type="gene ID" value="An02g00850"/>
</dbReference>
<dbReference type="GeneID" id="4978566"/>
<dbReference type="KEGG" id="ang:An02g00850"/>
<dbReference type="VEuPathDB" id="FungiDB:An02g00850"/>
<dbReference type="HOGENOM" id="CLU_016972_4_0_1"/>
<dbReference type="Proteomes" id="UP000006706">
    <property type="component" value="Chromosome 4R"/>
</dbReference>
<dbReference type="GO" id="GO:0005886">
    <property type="term" value="C:plasma membrane"/>
    <property type="evidence" value="ECO:0007669"/>
    <property type="project" value="UniProtKB-SubCell"/>
</dbReference>
<dbReference type="GO" id="GO:0098552">
    <property type="term" value="C:side of membrane"/>
    <property type="evidence" value="ECO:0007669"/>
    <property type="project" value="UniProtKB-KW"/>
</dbReference>
<dbReference type="GO" id="GO:0052861">
    <property type="term" value="F:endo-1,3(4)-beta-glucanase activity"/>
    <property type="evidence" value="ECO:0007669"/>
    <property type="project" value="UniProtKB-EC"/>
</dbReference>
<dbReference type="GO" id="GO:0030245">
    <property type="term" value="P:cellulose catabolic process"/>
    <property type="evidence" value="ECO:0007669"/>
    <property type="project" value="UniProtKB-KW"/>
</dbReference>
<dbReference type="CDD" id="cd02181">
    <property type="entry name" value="GH16_fungal_Lam16A_glucanase"/>
    <property type="match status" value="1"/>
</dbReference>
<dbReference type="FunFam" id="2.60.120.200:FF:000114">
    <property type="entry name" value="Probable endo-1,3(4)-beta-glucanase NFIA_089530"/>
    <property type="match status" value="1"/>
</dbReference>
<dbReference type="Gene3D" id="2.60.120.200">
    <property type="match status" value="1"/>
</dbReference>
<dbReference type="InterPro" id="IPR013320">
    <property type="entry name" value="ConA-like_dom_sf"/>
</dbReference>
<dbReference type="InterPro" id="IPR000757">
    <property type="entry name" value="GH16"/>
</dbReference>
<dbReference type="InterPro" id="IPR050546">
    <property type="entry name" value="Glycosyl_Hydrlase_16"/>
</dbReference>
<dbReference type="PANTHER" id="PTHR10963:SF58">
    <property type="entry name" value="ENDO-1,3(4)-BETA-GLUCANASE XGEA"/>
    <property type="match status" value="1"/>
</dbReference>
<dbReference type="PANTHER" id="PTHR10963">
    <property type="entry name" value="GLYCOSYL HYDROLASE-RELATED"/>
    <property type="match status" value="1"/>
</dbReference>
<dbReference type="SUPFAM" id="SSF49899">
    <property type="entry name" value="Concanavalin A-like lectins/glucanases"/>
    <property type="match status" value="1"/>
</dbReference>
<dbReference type="PROSITE" id="PS51762">
    <property type="entry name" value="GH16_2"/>
    <property type="match status" value="1"/>
</dbReference>
<sequence length="739" mass="72556">MPTSTLLWSVGSLALSSMVLPAAASSYELVETWKGEDFLTAFDFYTGADPTNGFVTYANQSYAESTGLVKVNSNGTFYMGVDHTTKLSTNGPGRESVRIGSNKYYDEGLFIIDLQHMPGSVCGTWPAFWSTGKNWPTDGEIDIIEGVNKNEANEIVLHTSGTCQVSSQKMSGTLTSTECGEDAGTTGCVVEGTQGSSGTPFNENGGGVYAMQWTDEFLKFWFFPRGSIPSSITKGDPDVAAFGTPMAHMEGSCSIAEHFKAQQFIFDTTFCGDWAGGVYSTSGCPVSDSSSSFKSCVAYVAENPTAFAESYWEINYIKIYQTGVAASASASASHVESAASVAETISAVREGTNSVVATTTAATIAVTSTADAETATTMAGATTVAASTETSAADENGSSASTSTHYVTMTTTICPIAESSSAAAALAGGSSEATEASNSEGSPAAATPSSVTGASAEANESESTSAAVTTPSTSTGASAEANGSESSSASEAGSVAGATPSSVSTTGASGEADSSEGASAAATPSNVSSTGASAEANGSEDSSASSEAKTVAPSIPSSVTGASAEANGNDSASSNAATASNVSGASAQAGDNESTPASAGANAGSSAAPSSVSGASAEANGSEGSSSHSSGSQAGAHSYGSVPSSAAAYGRPAPSSSSHAFATAPSSTGSSRVPTSAAAANNAAAATQGSSASGSNSGSSGHGSSSATTPSTPVFTGGANKLTLGASSVLSVLAFALLA</sequence>
<accession>A2QBQ3</accession>
<feature type="signal peptide" evidence="2">
    <location>
        <begin position="1"/>
        <end position="24"/>
    </location>
</feature>
<feature type="chain" id="PRO_5000219530" description="Probable endo-1,3(4)-beta-glucanase An02g00850">
    <location>
        <begin position="25"/>
        <end position="717"/>
    </location>
</feature>
<feature type="propeptide" id="PRO_0000395090" description="Removed in mature form" evidence="2">
    <location>
        <begin position="718"/>
        <end position="739"/>
    </location>
</feature>
<feature type="domain" description="GH16" evidence="3">
    <location>
        <begin position="31"/>
        <end position="283"/>
    </location>
</feature>
<feature type="region of interest" description="Disordered" evidence="4">
    <location>
        <begin position="431"/>
        <end position="718"/>
    </location>
</feature>
<feature type="compositionally biased region" description="Low complexity" evidence="4">
    <location>
        <begin position="431"/>
        <end position="442"/>
    </location>
</feature>
<feature type="compositionally biased region" description="Low complexity" evidence="4">
    <location>
        <begin position="452"/>
        <end position="499"/>
    </location>
</feature>
<feature type="compositionally biased region" description="Low complexity" evidence="4">
    <location>
        <begin position="507"/>
        <end position="522"/>
    </location>
</feature>
<feature type="compositionally biased region" description="Polar residues" evidence="4">
    <location>
        <begin position="523"/>
        <end position="532"/>
    </location>
</feature>
<feature type="compositionally biased region" description="Polar residues" evidence="4">
    <location>
        <begin position="539"/>
        <end position="548"/>
    </location>
</feature>
<feature type="compositionally biased region" description="Low complexity" evidence="4">
    <location>
        <begin position="561"/>
        <end position="587"/>
    </location>
</feature>
<feature type="compositionally biased region" description="Low complexity" evidence="4">
    <location>
        <begin position="597"/>
        <end position="641"/>
    </location>
</feature>
<feature type="compositionally biased region" description="Polar residues" evidence="4">
    <location>
        <begin position="654"/>
        <end position="673"/>
    </location>
</feature>
<feature type="compositionally biased region" description="Low complexity" evidence="4">
    <location>
        <begin position="674"/>
        <end position="713"/>
    </location>
</feature>
<feature type="active site" description="Nucleophile" evidence="1">
    <location>
        <position position="140"/>
    </location>
</feature>
<feature type="active site" description="Proton donor" evidence="1">
    <location>
        <position position="145"/>
    </location>
</feature>
<feature type="lipid moiety-binding region" description="GPI-anchor amidated glycine" evidence="2">
    <location>
        <position position="717"/>
    </location>
</feature>
<feature type="glycosylation site" description="N-linked (GlcNAc...) asparagine" evidence="2">
    <location>
        <position position="59"/>
    </location>
</feature>
<feature type="glycosylation site" description="N-linked (GlcNAc...) asparagine" evidence="2">
    <location>
        <position position="74"/>
    </location>
</feature>
<feature type="glycosylation site" description="N-linked (GlcNAc...) asparagine" evidence="2">
    <location>
        <position position="396"/>
    </location>
</feature>
<feature type="glycosylation site" description="N-linked (GlcNAc...) asparagine" evidence="2">
    <location>
        <position position="459"/>
    </location>
</feature>
<feature type="glycosylation site" description="N-linked (GlcNAc...) asparagine" evidence="2">
    <location>
        <position position="482"/>
    </location>
</feature>
<feature type="glycosylation site" description="N-linked (GlcNAc...) asparagine" evidence="2">
    <location>
        <position position="526"/>
    </location>
</feature>
<feature type="glycosylation site" description="N-linked (GlcNAc...) asparagine" evidence="2">
    <location>
        <position position="537"/>
    </location>
</feature>
<feature type="glycosylation site" description="N-linked (GlcNAc...) asparagine" evidence="2">
    <location>
        <position position="569"/>
    </location>
</feature>
<feature type="glycosylation site" description="N-linked (GlcNAc...) asparagine" evidence="2">
    <location>
        <position position="581"/>
    </location>
</feature>
<feature type="glycosylation site" description="N-linked (GlcNAc...) asparagine" evidence="2">
    <location>
        <position position="592"/>
    </location>
</feature>
<feature type="glycosylation site" description="N-linked (GlcNAc...) asparagine" evidence="2">
    <location>
        <position position="620"/>
    </location>
</feature>
<reference key="1">
    <citation type="journal article" date="2007" name="Nat. Biotechnol.">
        <title>Genome sequencing and analysis of the versatile cell factory Aspergillus niger CBS 513.88.</title>
        <authorList>
            <person name="Pel H.J."/>
            <person name="de Winde J.H."/>
            <person name="Archer D.B."/>
            <person name="Dyer P.S."/>
            <person name="Hofmann G."/>
            <person name="Schaap P.J."/>
            <person name="Turner G."/>
            <person name="de Vries R.P."/>
            <person name="Albang R."/>
            <person name="Albermann K."/>
            <person name="Andersen M.R."/>
            <person name="Bendtsen J.D."/>
            <person name="Benen J.A.E."/>
            <person name="van den Berg M."/>
            <person name="Breestraat S."/>
            <person name="Caddick M.X."/>
            <person name="Contreras R."/>
            <person name="Cornell M."/>
            <person name="Coutinho P.M."/>
            <person name="Danchin E.G.J."/>
            <person name="Debets A.J.M."/>
            <person name="Dekker P."/>
            <person name="van Dijck P.W.M."/>
            <person name="van Dijk A."/>
            <person name="Dijkhuizen L."/>
            <person name="Driessen A.J.M."/>
            <person name="d'Enfert C."/>
            <person name="Geysens S."/>
            <person name="Goosen C."/>
            <person name="Groot G.S.P."/>
            <person name="de Groot P.W.J."/>
            <person name="Guillemette T."/>
            <person name="Henrissat B."/>
            <person name="Herweijer M."/>
            <person name="van den Hombergh J.P.T.W."/>
            <person name="van den Hondel C.A.M.J.J."/>
            <person name="van der Heijden R.T.J.M."/>
            <person name="van der Kaaij R.M."/>
            <person name="Klis F.M."/>
            <person name="Kools H.J."/>
            <person name="Kubicek C.P."/>
            <person name="van Kuyk P.A."/>
            <person name="Lauber J."/>
            <person name="Lu X."/>
            <person name="van der Maarel M.J.E.C."/>
            <person name="Meulenberg R."/>
            <person name="Menke H."/>
            <person name="Mortimer M.A."/>
            <person name="Nielsen J."/>
            <person name="Oliver S.G."/>
            <person name="Olsthoorn M."/>
            <person name="Pal K."/>
            <person name="van Peij N.N.M.E."/>
            <person name="Ram A.F.J."/>
            <person name="Rinas U."/>
            <person name="Roubos J.A."/>
            <person name="Sagt C.M.J."/>
            <person name="Schmoll M."/>
            <person name="Sun J."/>
            <person name="Ussery D."/>
            <person name="Varga J."/>
            <person name="Vervecken W."/>
            <person name="van de Vondervoort P.J.J."/>
            <person name="Wedler H."/>
            <person name="Woesten H.A.B."/>
            <person name="Zeng A.-P."/>
            <person name="van Ooyen A.J.J."/>
            <person name="Visser J."/>
            <person name="Stam H."/>
        </authorList>
    </citation>
    <scope>NUCLEOTIDE SEQUENCE [LARGE SCALE GENOMIC DNA]</scope>
    <source>
        <strain>ATCC MYA-4892 / CBS 513.88 / FGSC A1513</strain>
    </source>
</reference>
<evidence type="ECO:0000250" key="1"/>
<evidence type="ECO:0000255" key="2"/>
<evidence type="ECO:0000255" key="3">
    <source>
        <dbReference type="PROSITE-ProRule" id="PRU01098"/>
    </source>
</evidence>
<evidence type="ECO:0000256" key="4">
    <source>
        <dbReference type="SAM" id="MobiDB-lite"/>
    </source>
</evidence>
<evidence type="ECO:0000305" key="5"/>
<organism>
    <name type="scientific">Aspergillus niger (strain ATCC MYA-4892 / CBS 513.88 / FGSC A1513)</name>
    <dbReference type="NCBI Taxonomy" id="425011"/>
    <lineage>
        <taxon>Eukaryota</taxon>
        <taxon>Fungi</taxon>
        <taxon>Dikarya</taxon>
        <taxon>Ascomycota</taxon>
        <taxon>Pezizomycotina</taxon>
        <taxon>Eurotiomycetes</taxon>
        <taxon>Eurotiomycetidae</taxon>
        <taxon>Eurotiales</taxon>
        <taxon>Aspergillaceae</taxon>
        <taxon>Aspergillus</taxon>
        <taxon>Aspergillus subgen. Circumdati</taxon>
    </lineage>
</organism>
<comment type="function">
    <text evidence="1">Mixed-linked glucanase involved in the degradation of complex natural cellulosic substrates.</text>
</comment>
<comment type="catalytic activity">
    <reaction>
        <text>Endohydrolysis of (1-&gt;3)- or (1-&gt;4)-linkages in beta-D-glucans when the glucose residue whose reducing group is involved in the linkage to be hydrolyzed is itself substituted at C-3.</text>
        <dbReference type="EC" id="3.2.1.6"/>
    </reaction>
</comment>
<comment type="subcellular location">
    <subcellularLocation>
        <location evidence="1">Cell membrane</location>
        <topology evidence="1">Lipid-anchor</topology>
        <topology evidence="1">GPI-anchor</topology>
    </subcellularLocation>
</comment>
<comment type="similarity">
    <text evidence="5">Belongs to the glycosyl hydrolase 16 family.</text>
</comment>
<proteinExistence type="inferred from homology"/>
<name>EGLX_ASPNC</name>
<keyword id="KW-0119">Carbohydrate metabolism</keyword>
<keyword id="KW-1003">Cell membrane</keyword>
<keyword id="KW-0136">Cellulose degradation</keyword>
<keyword id="KW-0325">Glycoprotein</keyword>
<keyword id="KW-0326">Glycosidase</keyword>
<keyword id="KW-0336">GPI-anchor</keyword>
<keyword id="KW-0378">Hydrolase</keyword>
<keyword id="KW-0449">Lipoprotein</keyword>
<keyword id="KW-0472">Membrane</keyword>
<keyword id="KW-0624">Polysaccharide degradation</keyword>
<keyword id="KW-1185">Reference proteome</keyword>
<keyword id="KW-0732">Signal</keyword>
<gene>
    <name type="ORF">An02g00850</name>
</gene>